<accession>A0PP02</accession>
<reference key="1">
    <citation type="journal article" date="2007" name="Genome Res.">
        <title>Reductive evolution and niche adaptation inferred from the genome of Mycobacterium ulcerans, the causative agent of Buruli ulcer.</title>
        <authorList>
            <person name="Stinear T.P."/>
            <person name="Seemann T."/>
            <person name="Pidot S."/>
            <person name="Frigui W."/>
            <person name="Reysset G."/>
            <person name="Garnier T."/>
            <person name="Meurice G."/>
            <person name="Simon D."/>
            <person name="Bouchier C."/>
            <person name="Ma L."/>
            <person name="Tichit M."/>
            <person name="Porter J.L."/>
            <person name="Ryan J."/>
            <person name="Johnson P.D.R."/>
            <person name="Davies J.K."/>
            <person name="Jenkin G.A."/>
            <person name="Small P.L.C."/>
            <person name="Jones L.M."/>
            <person name="Tekaia F."/>
            <person name="Laval F."/>
            <person name="Daffe M."/>
            <person name="Parkhill J."/>
            <person name="Cole S.T."/>
        </authorList>
    </citation>
    <scope>NUCLEOTIDE SEQUENCE [LARGE SCALE GENOMIC DNA]</scope>
    <source>
        <strain>Agy99</strain>
    </source>
</reference>
<dbReference type="EC" id="2.3.1.47"/>
<dbReference type="EMBL" id="CP000325">
    <property type="protein sequence ID" value="ABL04071.1"/>
    <property type="molecule type" value="Genomic_DNA"/>
</dbReference>
<dbReference type="RefSeq" id="WP_011739691.1">
    <property type="nucleotide sequence ID" value="NC_008611.1"/>
</dbReference>
<dbReference type="SMR" id="A0PP02"/>
<dbReference type="KEGG" id="mul:MUL_1560"/>
<dbReference type="eggNOG" id="COG0156">
    <property type="taxonomic scope" value="Bacteria"/>
</dbReference>
<dbReference type="HOGENOM" id="CLU_015846_11_2_11"/>
<dbReference type="UniPathway" id="UPA00078"/>
<dbReference type="Proteomes" id="UP000000765">
    <property type="component" value="Chromosome"/>
</dbReference>
<dbReference type="GO" id="GO:0008710">
    <property type="term" value="F:8-amino-7-oxononanoate synthase activity"/>
    <property type="evidence" value="ECO:0007669"/>
    <property type="project" value="UniProtKB-EC"/>
</dbReference>
<dbReference type="GO" id="GO:0030170">
    <property type="term" value="F:pyridoxal phosphate binding"/>
    <property type="evidence" value="ECO:0007669"/>
    <property type="project" value="InterPro"/>
</dbReference>
<dbReference type="GO" id="GO:0009102">
    <property type="term" value="P:biotin biosynthetic process"/>
    <property type="evidence" value="ECO:0007669"/>
    <property type="project" value="UniProtKB-UniPathway"/>
</dbReference>
<dbReference type="Gene3D" id="3.90.1150.10">
    <property type="entry name" value="Aspartate Aminotransferase, domain 1"/>
    <property type="match status" value="1"/>
</dbReference>
<dbReference type="Gene3D" id="3.40.640.10">
    <property type="entry name" value="Type I PLP-dependent aspartate aminotransferase-like (Major domain)"/>
    <property type="match status" value="1"/>
</dbReference>
<dbReference type="InterPro" id="IPR001917">
    <property type="entry name" value="Aminotrans_II_pyridoxalP_BS"/>
</dbReference>
<dbReference type="InterPro" id="IPR004839">
    <property type="entry name" value="Aminotransferase_I/II_large"/>
</dbReference>
<dbReference type="InterPro" id="IPR050087">
    <property type="entry name" value="AON_synthase_class-II"/>
</dbReference>
<dbReference type="InterPro" id="IPR015424">
    <property type="entry name" value="PyrdxlP-dep_Trfase"/>
</dbReference>
<dbReference type="InterPro" id="IPR015421">
    <property type="entry name" value="PyrdxlP-dep_Trfase_major"/>
</dbReference>
<dbReference type="InterPro" id="IPR015422">
    <property type="entry name" value="PyrdxlP-dep_Trfase_small"/>
</dbReference>
<dbReference type="PANTHER" id="PTHR13693:SF100">
    <property type="entry name" value="8-AMINO-7-OXONONANOATE SYNTHASE"/>
    <property type="match status" value="1"/>
</dbReference>
<dbReference type="PANTHER" id="PTHR13693">
    <property type="entry name" value="CLASS II AMINOTRANSFERASE/8-AMINO-7-OXONONANOATE SYNTHASE"/>
    <property type="match status" value="1"/>
</dbReference>
<dbReference type="Pfam" id="PF00155">
    <property type="entry name" value="Aminotran_1_2"/>
    <property type="match status" value="1"/>
</dbReference>
<dbReference type="SUPFAM" id="SSF53383">
    <property type="entry name" value="PLP-dependent transferases"/>
    <property type="match status" value="1"/>
</dbReference>
<dbReference type="PROSITE" id="PS00599">
    <property type="entry name" value="AA_TRANSFER_CLASS_2"/>
    <property type="match status" value="1"/>
</dbReference>
<protein>
    <recommendedName>
        <fullName>8-amino-7-oxononanoate synthase</fullName>
        <shortName>AONS</shortName>
        <ecNumber>2.3.1.47</ecNumber>
    </recommendedName>
    <alternativeName>
        <fullName>7-keto-8-amino-pelargonic acid synthase</fullName>
        <shortName>7-KAP synthase</shortName>
        <shortName>KAPA synthase</shortName>
    </alternativeName>
    <alternativeName>
        <fullName>8-amino-7-ketopelargonate synthase</fullName>
    </alternativeName>
    <alternativeName>
        <fullName>Alpha-oxoamine synthase</fullName>
    </alternativeName>
</protein>
<feature type="chain" id="PRO_0000381045" description="8-amino-7-oxononanoate synthase">
    <location>
        <begin position="1"/>
        <end position="389"/>
    </location>
</feature>
<feature type="binding site" evidence="1">
    <location>
        <position position="31"/>
    </location>
    <ligand>
        <name>substrate</name>
    </ligand>
</feature>
<feature type="binding site" evidence="1">
    <location>
        <begin position="109"/>
        <end position="110"/>
    </location>
    <ligand>
        <name>pyridoxal 5'-phosphate</name>
        <dbReference type="ChEBI" id="CHEBI:597326"/>
    </ligand>
</feature>
<feature type="binding site" evidence="1">
    <location>
        <position position="134"/>
    </location>
    <ligand>
        <name>substrate</name>
    </ligand>
</feature>
<feature type="binding site" evidence="1">
    <location>
        <position position="180"/>
    </location>
    <ligand>
        <name>pyridoxal 5'-phosphate</name>
        <dbReference type="ChEBI" id="CHEBI:597326"/>
    </ligand>
</feature>
<feature type="binding site" evidence="1">
    <location>
        <begin position="205"/>
        <end position="208"/>
    </location>
    <ligand>
        <name>pyridoxal 5'-phosphate</name>
        <dbReference type="ChEBI" id="CHEBI:597326"/>
    </ligand>
</feature>
<feature type="binding site" evidence="1">
    <location>
        <begin position="236"/>
        <end position="239"/>
    </location>
    <ligand>
        <name>pyridoxal 5'-phosphate</name>
        <dbReference type="ChEBI" id="CHEBI:597326"/>
    </ligand>
</feature>
<feature type="binding site" evidence="1">
    <location>
        <position position="349"/>
    </location>
    <ligand>
        <name>substrate</name>
    </ligand>
</feature>
<feature type="modified residue" description="N6-(pyridoxal phosphate)lysine" evidence="1">
    <location>
        <position position="239"/>
    </location>
</feature>
<organism>
    <name type="scientific">Mycobacterium ulcerans (strain Agy99)</name>
    <dbReference type="NCBI Taxonomy" id="362242"/>
    <lineage>
        <taxon>Bacteria</taxon>
        <taxon>Bacillati</taxon>
        <taxon>Actinomycetota</taxon>
        <taxon>Actinomycetes</taxon>
        <taxon>Mycobacteriales</taxon>
        <taxon>Mycobacteriaceae</taxon>
        <taxon>Mycobacterium</taxon>
        <taxon>Mycobacterium ulcerans group</taxon>
    </lineage>
</organism>
<evidence type="ECO:0000250" key="1"/>
<evidence type="ECO:0000305" key="2"/>
<name>BIOF_MYCUA</name>
<sequence>MGAPTQIPIETSPLAWLDAVERQRRDAGLRRSLRPRPPVGTELDLASNDYLGLSQHPDVIEGGVQALRIWGAGATGSRLVTGDTELHQQLEAELAEYVGAAAGLLFSSGYTANLGAVVGLSGPGSLLVSDAYSHASLVDACRLSRARVVVTPHRDVAAVDAALASRDEQRAMVITDSVFSADGTLAPLRELLAACRRHRALLVIDEAHGLGVRGGGRGLLHELGLAGAPDVVLTTTLSKALGSQGGAVLGPAAVRAHLIDAARPFIFDTGLAPGAVGAARAALGVLKAEQWRPGAVLQNARELADICDVPETPQSAVVSVLLGDPEVALAAAAACLDAGVKVGCFRPPTVPAGTSRLRLTARASLSPDEMELARRVLTDVLLGPAAARR</sequence>
<gene>
    <name type="ordered locus">MUL_1560</name>
</gene>
<keyword id="KW-0012">Acyltransferase</keyword>
<keyword id="KW-0093">Biotin biosynthesis</keyword>
<keyword id="KW-0663">Pyridoxal phosphate</keyword>
<keyword id="KW-0808">Transferase</keyword>
<comment type="function">
    <text evidence="1">Catalyzes the decarboxylative condensation of pimeloyl-[acyl-carrier protein] and L-alanine to produce 8-amino-7-oxononanoate (AON), [acyl-carrier protein], and carbon dioxide.</text>
</comment>
<comment type="catalytic activity">
    <reaction>
        <text>6-carboxyhexanoyl-[ACP] + L-alanine + H(+) = (8S)-8-amino-7-oxononanoate + holo-[ACP] + CO2</text>
        <dbReference type="Rhea" id="RHEA:42288"/>
        <dbReference type="Rhea" id="RHEA-COMP:9685"/>
        <dbReference type="Rhea" id="RHEA-COMP:9955"/>
        <dbReference type="ChEBI" id="CHEBI:15378"/>
        <dbReference type="ChEBI" id="CHEBI:16526"/>
        <dbReference type="ChEBI" id="CHEBI:57972"/>
        <dbReference type="ChEBI" id="CHEBI:64479"/>
        <dbReference type="ChEBI" id="CHEBI:78846"/>
        <dbReference type="ChEBI" id="CHEBI:149468"/>
        <dbReference type="EC" id="2.3.1.47"/>
    </reaction>
</comment>
<comment type="cofactor">
    <cofactor evidence="1">
        <name>pyridoxal 5'-phosphate</name>
        <dbReference type="ChEBI" id="CHEBI:597326"/>
    </cofactor>
</comment>
<comment type="pathway">
    <text>Cofactor biosynthesis; biotin biosynthesis.</text>
</comment>
<comment type="subunit">
    <text evidence="1">Homodimer.</text>
</comment>
<comment type="similarity">
    <text evidence="2">Belongs to the class-II pyridoxal-phosphate-dependent aminotransferase family. BioF subfamily.</text>
</comment>
<proteinExistence type="inferred from homology"/>